<sequence>ASGENQAELKLATHNVYML</sequence>
<name>PHLC_STAIN</name>
<evidence type="ECO:0000305" key="1"/>
<organism>
    <name type="scientific">Staphylococcus intermedius</name>
    <dbReference type="NCBI Taxonomy" id="1285"/>
    <lineage>
        <taxon>Bacteria</taxon>
        <taxon>Bacillati</taxon>
        <taxon>Bacillota</taxon>
        <taxon>Bacilli</taxon>
        <taxon>Bacillales</taxon>
        <taxon>Staphylococcaceae</taxon>
        <taxon>Staphylococcus</taxon>
        <taxon>Staphylococcus intermedius group</taxon>
    </lineage>
</organism>
<accession>P80924</accession>
<dbReference type="EC" id="3.1.4.12"/>
<dbReference type="GO" id="GO:0004767">
    <property type="term" value="F:sphingomyelin phosphodiesterase activity"/>
    <property type="evidence" value="ECO:0007669"/>
    <property type="project" value="UniProtKB-EC"/>
</dbReference>
<dbReference type="GO" id="GO:0090729">
    <property type="term" value="F:toxin activity"/>
    <property type="evidence" value="ECO:0007669"/>
    <property type="project" value="UniProtKB-KW"/>
</dbReference>
<dbReference type="GO" id="GO:0031640">
    <property type="term" value="P:killing of cells of another organism"/>
    <property type="evidence" value="ECO:0007669"/>
    <property type="project" value="UniProtKB-KW"/>
</dbReference>
<comment type="function">
    <text>Required, with sphingomyelinase, to effect target cell lysis (hemolysis).</text>
</comment>
<comment type="catalytic activity">
    <reaction>
        <text>a sphingomyelin + H2O = phosphocholine + an N-acylsphing-4-enine + H(+)</text>
        <dbReference type="Rhea" id="RHEA:19253"/>
        <dbReference type="ChEBI" id="CHEBI:15377"/>
        <dbReference type="ChEBI" id="CHEBI:15378"/>
        <dbReference type="ChEBI" id="CHEBI:17636"/>
        <dbReference type="ChEBI" id="CHEBI:52639"/>
        <dbReference type="ChEBI" id="CHEBI:295975"/>
        <dbReference type="EC" id="3.1.4.12"/>
    </reaction>
</comment>
<comment type="cofactor">
    <cofactor>
        <name>Mg(2+)</name>
        <dbReference type="ChEBI" id="CHEBI:18420"/>
    </cofactor>
</comment>
<comment type="biophysicochemical properties">
    <phDependence>
        <text>Optimum pH is 6.0-7.5.</text>
    </phDependence>
</comment>
<comment type="subunit">
    <text>Monomer.</text>
</comment>
<comment type="miscellaneous">
    <text>It has a high specificity for sphingomyelin, hydrolyzes lysophosphatidylcholine at a much lower rate, but has no activity towards phosphatidylcholine, phosphatidylethanolamine, or phosphatidylserine.</text>
</comment>
<comment type="similarity">
    <text evidence="1">Belongs to the neutral sphingomyelinase family.</text>
</comment>
<reference key="1">
    <citation type="journal article" date="1996" name="Arch. Biochem. Biophys.">
        <title>Comparison of the beta-toxins from Staphylococcus aureus and Staphylococcus intermedius.</title>
        <authorList>
            <person name="Dziewanowska K."/>
            <person name="Edwards V.M."/>
            <person name="Deringer J.R."/>
            <person name="Bohach G.A."/>
            <person name="Guerra D.J."/>
        </authorList>
    </citation>
    <scope>PROTEIN SEQUENCE</scope>
    <source>
        <strain>94-072594</strain>
    </source>
</reference>
<protein>
    <recommendedName>
        <fullName>Sphingomyelinase C</fullName>
        <ecNumber>3.1.4.12</ecNumber>
    </recommendedName>
    <alternativeName>
        <fullName>Beta-hemolysin</fullName>
    </alternativeName>
    <alternativeName>
        <fullName>Beta-toxin</fullName>
    </alternativeName>
    <alternativeName>
        <fullName>Neutral sphingomyelinase</fullName>
        <shortName>nSMase</shortName>
    </alternativeName>
</protein>
<feature type="chain" id="PRO_0000075696" description="Sphingomyelinase C">
    <location>
        <begin position="1"/>
        <end position="19" status="greater than"/>
    </location>
</feature>
<feature type="non-terminal residue">
    <location>
        <position position="19"/>
    </location>
</feature>
<proteinExistence type="evidence at protein level"/>
<keyword id="KW-0204">Cytolysis</keyword>
<keyword id="KW-0903">Direct protein sequencing</keyword>
<keyword id="KW-0354">Hemolysis</keyword>
<keyword id="KW-0378">Hydrolase</keyword>
<keyword id="KW-0460">Magnesium</keyword>
<keyword id="KW-0800">Toxin</keyword>
<keyword id="KW-0843">Virulence</keyword>